<dbReference type="EC" id="3.5.1.5" evidence="1"/>
<dbReference type="EMBL" id="CP001172">
    <property type="protein sequence ID" value="ACJ56978.1"/>
    <property type="molecule type" value="Genomic_DNA"/>
</dbReference>
<dbReference type="RefSeq" id="WP_000612141.1">
    <property type="nucleotide sequence ID" value="NZ_CP001172.1"/>
</dbReference>
<dbReference type="SMR" id="B7GXU4"/>
<dbReference type="HOGENOM" id="CLU_129707_1_1_6"/>
<dbReference type="UniPathway" id="UPA00258">
    <property type="reaction ID" value="UER00370"/>
</dbReference>
<dbReference type="Proteomes" id="UP000006924">
    <property type="component" value="Chromosome"/>
</dbReference>
<dbReference type="GO" id="GO:0035550">
    <property type="term" value="C:urease complex"/>
    <property type="evidence" value="ECO:0007669"/>
    <property type="project" value="InterPro"/>
</dbReference>
<dbReference type="GO" id="GO:0009039">
    <property type="term" value="F:urease activity"/>
    <property type="evidence" value="ECO:0007669"/>
    <property type="project" value="UniProtKB-UniRule"/>
</dbReference>
<dbReference type="GO" id="GO:0043419">
    <property type="term" value="P:urea catabolic process"/>
    <property type="evidence" value="ECO:0007669"/>
    <property type="project" value="UniProtKB-UniRule"/>
</dbReference>
<dbReference type="CDD" id="cd00407">
    <property type="entry name" value="Urease_beta"/>
    <property type="match status" value="1"/>
</dbReference>
<dbReference type="FunFam" id="2.10.150.10:FF:000001">
    <property type="entry name" value="Urease subunit beta"/>
    <property type="match status" value="1"/>
</dbReference>
<dbReference type="Gene3D" id="2.10.150.10">
    <property type="entry name" value="Urease, beta subunit"/>
    <property type="match status" value="1"/>
</dbReference>
<dbReference type="HAMAP" id="MF_01954">
    <property type="entry name" value="Urease_beta"/>
    <property type="match status" value="1"/>
</dbReference>
<dbReference type="InterPro" id="IPR002019">
    <property type="entry name" value="Urease_beta-like"/>
</dbReference>
<dbReference type="InterPro" id="IPR036461">
    <property type="entry name" value="Urease_betasu_sf"/>
</dbReference>
<dbReference type="InterPro" id="IPR050069">
    <property type="entry name" value="Urease_subunit"/>
</dbReference>
<dbReference type="NCBIfam" id="NF009682">
    <property type="entry name" value="PRK13203.1"/>
    <property type="match status" value="1"/>
</dbReference>
<dbReference type="NCBIfam" id="TIGR00192">
    <property type="entry name" value="urease_beta"/>
    <property type="match status" value="1"/>
</dbReference>
<dbReference type="PANTHER" id="PTHR33569">
    <property type="entry name" value="UREASE"/>
    <property type="match status" value="1"/>
</dbReference>
<dbReference type="PANTHER" id="PTHR33569:SF1">
    <property type="entry name" value="UREASE"/>
    <property type="match status" value="1"/>
</dbReference>
<dbReference type="Pfam" id="PF00699">
    <property type="entry name" value="Urease_beta"/>
    <property type="match status" value="1"/>
</dbReference>
<dbReference type="SUPFAM" id="SSF51278">
    <property type="entry name" value="Urease, beta-subunit"/>
    <property type="match status" value="1"/>
</dbReference>
<proteinExistence type="inferred from homology"/>
<keyword id="KW-0963">Cytoplasm</keyword>
<keyword id="KW-0378">Hydrolase</keyword>
<gene>
    <name evidence="1" type="primary">ureB</name>
    <name type="ordered locus">ABBFA_002596</name>
</gene>
<accession>B7GXU4</accession>
<comment type="catalytic activity">
    <reaction evidence="1">
        <text>urea + 2 H2O + H(+) = hydrogencarbonate + 2 NH4(+)</text>
        <dbReference type="Rhea" id="RHEA:20557"/>
        <dbReference type="ChEBI" id="CHEBI:15377"/>
        <dbReference type="ChEBI" id="CHEBI:15378"/>
        <dbReference type="ChEBI" id="CHEBI:16199"/>
        <dbReference type="ChEBI" id="CHEBI:17544"/>
        <dbReference type="ChEBI" id="CHEBI:28938"/>
        <dbReference type="EC" id="3.5.1.5"/>
    </reaction>
</comment>
<comment type="pathway">
    <text evidence="1">Nitrogen metabolism; urea degradation; CO(2) and NH(3) from urea (urease route): step 1/1.</text>
</comment>
<comment type="subunit">
    <text evidence="1">Heterotrimer of UreA (gamma), UreB (beta) and UreC (alpha) subunits. Three heterotrimers associate to form the active enzyme.</text>
</comment>
<comment type="subcellular location">
    <subcellularLocation>
        <location evidence="1">Cytoplasm</location>
    </subcellularLocation>
</comment>
<comment type="similarity">
    <text evidence="1">Belongs to the urease beta subunit family.</text>
</comment>
<sequence>MIPGEVITPETDIELNVGRETLKVVVANLGDRPIQVGSHFHFYEANDALQFDREAVKGFRLNIAAGTAIRFEPGQSREVEIVALAGKREVYGFAGRVMGKLD</sequence>
<reference key="1">
    <citation type="journal article" date="2008" name="J. Bacteriol.">
        <title>Comparative genome sequence analysis of multidrug-resistant Acinetobacter baumannii.</title>
        <authorList>
            <person name="Adams M.D."/>
            <person name="Goglin K."/>
            <person name="Molyneaux N."/>
            <person name="Hujer K.M."/>
            <person name="Lavender H."/>
            <person name="Jamison J.J."/>
            <person name="MacDonald I.J."/>
            <person name="Martin K.M."/>
            <person name="Russo T."/>
            <person name="Campagnari A.A."/>
            <person name="Hujer A.M."/>
            <person name="Bonomo R.A."/>
            <person name="Gill S.R."/>
        </authorList>
    </citation>
    <scope>NUCLEOTIDE SEQUENCE [LARGE SCALE GENOMIC DNA]</scope>
    <source>
        <strain>AB307-0294</strain>
    </source>
</reference>
<name>URE2_ACIB3</name>
<organism>
    <name type="scientific">Acinetobacter baumannii (strain AB307-0294)</name>
    <dbReference type="NCBI Taxonomy" id="557600"/>
    <lineage>
        <taxon>Bacteria</taxon>
        <taxon>Pseudomonadati</taxon>
        <taxon>Pseudomonadota</taxon>
        <taxon>Gammaproteobacteria</taxon>
        <taxon>Moraxellales</taxon>
        <taxon>Moraxellaceae</taxon>
        <taxon>Acinetobacter</taxon>
        <taxon>Acinetobacter calcoaceticus/baumannii complex</taxon>
    </lineage>
</organism>
<protein>
    <recommendedName>
        <fullName evidence="1">Urease subunit beta</fullName>
        <ecNumber evidence="1">3.5.1.5</ecNumber>
    </recommendedName>
    <alternativeName>
        <fullName evidence="1">Urea amidohydrolase subunit beta</fullName>
    </alternativeName>
</protein>
<evidence type="ECO:0000255" key="1">
    <source>
        <dbReference type="HAMAP-Rule" id="MF_01954"/>
    </source>
</evidence>
<feature type="chain" id="PRO_1000188901" description="Urease subunit beta">
    <location>
        <begin position="1"/>
        <end position="102"/>
    </location>
</feature>